<feature type="chain" id="PRO_1000197226" description="Glycine--tRNA ligase beta subunit">
    <location>
        <begin position="1"/>
        <end position="688"/>
    </location>
</feature>
<keyword id="KW-0030">Aminoacyl-tRNA synthetase</keyword>
<keyword id="KW-0067">ATP-binding</keyword>
<keyword id="KW-0963">Cytoplasm</keyword>
<keyword id="KW-0436">Ligase</keyword>
<keyword id="KW-0547">Nucleotide-binding</keyword>
<keyword id="KW-0648">Protein biosynthesis</keyword>
<accession>B7VGK6</accession>
<organism>
    <name type="scientific">Vibrio atlanticus (strain LGP32)</name>
    <name type="common">Vibrio splendidus (strain Mel32)</name>
    <dbReference type="NCBI Taxonomy" id="575788"/>
    <lineage>
        <taxon>Bacteria</taxon>
        <taxon>Pseudomonadati</taxon>
        <taxon>Pseudomonadota</taxon>
        <taxon>Gammaproteobacteria</taxon>
        <taxon>Vibrionales</taxon>
        <taxon>Vibrionaceae</taxon>
        <taxon>Vibrio</taxon>
    </lineage>
</organism>
<name>SYGB_VIBA3</name>
<evidence type="ECO:0000255" key="1">
    <source>
        <dbReference type="HAMAP-Rule" id="MF_00255"/>
    </source>
</evidence>
<comment type="catalytic activity">
    <reaction evidence="1">
        <text>tRNA(Gly) + glycine + ATP = glycyl-tRNA(Gly) + AMP + diphosphate</text>
        <dbReference type="Rhea" id="RHEA:16013"/>
        <dbReference type="Rhea" id="RHEA-COMP:9664"/>
        <dbReference type="Rhea" id="RHEA-COMP:9683"/>
        <dbReference type="ChEBI" id="CHEBI:30616"/>
        <dbReference type="ChEBI" id="CHEBI:33019"/>
        <dbReference type="ChEBI" id="CHEBI:57305"/>
        <dbReference type="ChEBI" id="CHEBI:78442"/>
        <dbReference type="ChEBI" id="CHEBI:78522"/>
        <dbReference type="ChEBI" id="CHEBI:456215"/>
        <dbReference type="EC" id="6.1.1.14"/>
    </reaction>
</comment>
<comment type="subunit">
    <text evidence="1">Tetramer of two alpha and two beta subunits.</text>
</comment>
<comment type="subcellular location">
    <subcellularLocation>
        <location evidence="1">Cytoplasm</location>
    </subcellularLocation>
</comment>
<comment type="similarity">
    <text evidence="1">Belongs to the class-II aminoacyl-tRNA synthetase family.</text>
</comment>
<sequence length="688" mass="75785">MAKNFLIELGTEELPPTALRSLAEAFASNFEAGLKTAELSHEGIKWYAAPRRLALKVTALAEGQADKVVEKRGPAISVAFDAEGNATKAAQGWARGNGITVEQADRLKTDKGEWLLFKQEVAGKPVQELVMDIAAKALAGLPIPKAMRWGNSDIQFIRPVKTLTVLLGDELVEGKILGVASARTIRGHRFMGEQEFTIDSADQYPAILEERGKVMADYDARKAIILADAKKAADAVGGIADLEDDLVEEVTSLVEWPVVLTAKFEQVFLKVPSEALVYTMKGDQKYFPVYDADKNLLPNFIFVSNIESKEPRHVIEGNEKVVRPRLADAEFFFNTDRKRPLIDRLAELDQAIFQKQLGTIKDKTDRITELAGYIAEQIDADVEKSKRAGLLAKCDLMTSMVFEFTDTQGVMGMHYATHDGEDEQVALALYEQYMPRFAGDTLPSTGISSAVAMADKLDTIVGIFGIGQAPKGSDPFALRRASLGVLRIIVENGYNLDLTDLIGKAKELLGDKLTNENVEADVIDFMLGRFRAWYQDAGFSVDIIQAVLARRPTKPADFDQRVKAVSHFRELEAAEALAAANKRVGNILAKFDGELPAEIDLALLQEDAEKALAENVEVMTEALEPAFATGNYQEALSKLADLREPVDAFFDNVMVMADDEALKKNRLTLLNNLRNLFLQIADISLLQK</sequence>
<dbReference type="EC" id="6.1.1.14" evidence="1"/>
<dbReference type="EMBL" id="FM954972">
    <property type="protein sequence ID" value="CAV17089.1"/>
    <property type="molecule type" value="Genomic_DNA"/>
</dbReference>
<dbReference type="SMR" id="B7VGK6"/>
<dbReference type="STRING" id="575788.VS_0032"/>
<dbReference type="KEGG" id="vsp:VS_0032"/>
<dbReference type="PATRIC" id="fig|575788.5.peg.1446"/>
<dbReference type="eggNOG" id="COG0751">
    <property type="taxonomic scope" value="Bacteria"/>
</dbReference>
<dbReference type="HOGENOM" id="CLU_007220_2_2_6"/>
<dbReference type="Proteomes" id="UP000009100">
    <property type="component" value="Chromosome 1"/>
</dbReference>
<dbReference type="GO" id="GO:0005829">
    <property type="term" value="C:cytosol"/>
    <property type="evidence" value="ECO:0007669"/>
    <property type="project" value="TreeGrafter"/>
</dbReference>
<dbReference type="GO" id="GO:0004814">
    <property type="term" value="F:arginine-tRNA ligase activity"/>
    <property type="evidence" value="ECO:0007669"/>
    <property type="project" value="InterPro"/>
</dbReference>
<dbReference type="GO" id="GO:0005524">
    <property type="term" value="F:ATP binding"/>
    <property type="evidence" value="ECO:0007669"/>
    <property type="project" value="UniProtKB-UniRule"/>
</dbReference>
<dbReference type="GO" id="GO:0004820">
    <property type="term" value="F:glycine-tRNA ligase activity"/>
    <property type="evidence" value="ECO:0007669"/>
    <property type="project" value="UniProtKB-UniRule"/>
</dbReference>
<dbReference type="GO" id="GO:0006420">
    <property type="term" value="P:arginyl-tRNA aminoacylation"/>
    <property type="evidence" value="ECO:0007669"/>
    <property type="project" value="InterPro"/>
</dbReference>
<dbReference type="GO" id="GO:0006426">
    <property type="term" value="P:glycyl-tRNA aminoacylation"/>
    <property type="evidence" value="ECO:0007669"/>
    <property type="project" value="UniProtKB-UniRule"/>
</dbReference>
<dbReference type="Gene3D" id="1.10.730.10">
    <property type="entry name" value="Isoleucyl-tRNA Synthetase, Domain 1"/>
    <property type="match status" value="1"/>
</dbReference>
<dbReference type="HAMAP" id="MF_00255">
    <property type="entry name" value="Gly_tRNA_synth_beta"/>
    <property type="match status" value="1"/>
</dbReference>
<dbReference type="InterPro" id="IPR008909">
    <property type="entry name" value="DALR_anticod-bd"/>
</dbReference>
<dbReference type="InterPro" id="IPR015944">
    <property type="entry name" value="Gly-tRNA-synth_bsu"/>
</dbReference>
<dbReference type="InterPro" id="IPR006194">
    <property type="entry name" value="Gly-tRNA-synth_heterodimer"/>
</dbReference>
<dbReference type="NCBIfam" id="TIGR00211">
    <property type="entry name" value="glyS"/>
    <property type="match status" value="1"/>
</dbReference>
<dbReference type="PANTHER" id="PTHR30075:SF2">
    <property type="entry name" value="GLYCINE--TRNA LIGASE, CHLOROPLASTIC_MITOCHONDRIAL 2"/>
    <property type="match status" value="1"/>
</dbReference>
<dbReference type="PANTHER" id="PTHR30075">
    <property type="entry name" value="GLYCYL-TRNA SYNTHETASE"/>
    <property type="match status" value="1"/>
</dbReference>
<dbReference type="Pfam" id="PF05746">
    <property type="entry name" value="DALR_1"/>
    <property type="match status" value="1"/>
</dbReference>
<dbReference type="Pfam" id="PF02092">
    <property type="entry name" value="tRNA_synt_2f"/>
    <property type="match status" value="1"/>
</dbReference>
<dbReference type="PRINTS" id="PR01045">
    <property type="entry name" value="TRNASYNTHGB"/>
</dbReference>
<dbReference type="SUPFAM" id="SSF109604">
    <property type="entry name" value="HD-domain/PDEase-like"/>
    <property type="match status" value="1"/>
</dbReference>
<dbReference type="PROSITE" id="PS50861">
    <property type="entry name" value="AA_TRNA_LIGASE_II_GLYAB"/>
    <property type="match status" value="1"/>
</dbReference>
<proteinExistence type="inferred from homology"/>
<protein>
    <recommendedName>
        <fullName evidence="1">Glycine--tRNA ligase beta subunit</fullName>
        <ecNumber evidence="1">6.1.1.14</ecNumber>
    </recommendedName>
    <alternativeName>
        <fullName evidence="1">Glycyl-tRNA synthetase beta subunit</fullName>
        <shortName evidence="1">GlyRS</shortName>
    </alternativeName>
</protein>
<gene>
    <name evidence="1" type="primary">glyS</name>
    <name type="ordered locus">VS_0032</name>
</gene>
<reference key="1">
    <citation type="submission" date="2009-02" db="EMBL/GenBank/DDBJ databases">
        <title>Vibrio splendidus str. LGP32 complete genome.</title>
        <authorList>
            <person name="Mazel D."/>
            <person name="Le Roux F."/>
        </authorList>
    </citation>
    <scope>NUCLEOTIDE SEQUENCE [LARGE SCALE GENOMIC DNA]</scope>
    <source>
        <strain>LGP32</strain>
    </source>
</reference>